<evidence type="ECO:0000255" key="1">
    <source>
        <dbReference type="HAMAP-Rule" id="MF_01405"/>
    </source>
</evidence>
<dbReference type="EC" id="3.6.1.66" evidence="1"/>
<dbReference type="EMBL" id="AE008384">
    <property type="protein sequence ID" value="AAM30299.1"/>
    <property type="molecule type" value="Genomic_DNA"/>
</dbReference>
<dbReference type="RefSeq" id="WP_011032554.1">
    <property type="nucleotide sequence ID" value="NC_003901.1"/>
</dbReference>
<dbReference type="SMR" id="Q8PZ91"/>
<dbReference type="KEGG" id="mma:MM_0603"/>
<dbReference type="PATRIC" id="fig|192952.21.peg.713"/>
<dbReference type="eggNOG" id="arCOG04184">
    <property type="taxonomic scope" value="Archaea"/>
</dbReference>
<dbReference type="HOGENOM" id="CLU_082080_1_0_2"/>
<dbReference type="Proteomes" id="UP000000595">
    <property type="component" value="Chromosome"/>
</dbReference>
<dbReference type="GO" id="GO:0005737">
    <property type="term" value="C:cytoplasm"/>
    <property type="evidence" value="ECO:0007669"/>
    <property type="project" value="TreeGrafter"/>
</dbReference>
<dbReference type="GO" id="GO:0035870">
    <property type="term" value="F:dITP diphosphatase activity"/>
    <property type="evidence" value="ECO:0007669"/>
    <property type="project" value="RHEA"/>
</dbReference>
<dbReference type="GO" id="GO:0036220">
    <property type="term" value="F:ITP diphosphatase activity"/>
    <property type="evidence" value="ECO:0007669"/>
    <property type="project" value="UniProtKB-EC"/>
</dbReference>
<dbReference type="GO" id="GO:0046872">
    <property type="term" value="F:metal ion binding"/>
    <property type="evidence" value="ECO:0007669"/>
    <property type="project" value="UniProtKB-KW"/>
</dbReference>
<dbReference type="GO" id="GO:0000166">
    <property type="term" value="F:nucleotide binding"/>
    <property type="evidence" value="ECO:0007669"/>
    <property type="project" value="UniProtKB-KW"/>
</dbReference>
<dbReference type="GO" id="GO:0017111">
    <property type="term" value="F:ribonucleoside triphosphate phosphatase activity"/>
    <property type="evidence" value="ECO:0007669"/>
    <property type="project" value="InterPro"/>
</dbReference>
<dbReference type="GO" id="GO:0036222">
    <property type="term" value="F:XTP diphosphatase activity"/>
    <property type="evidence" value="ECO:0007669"/>
    <property type="project" value="RHEA"/>
</dbReference>
<dbReference type="GO" id="GO:0009117">
    <property type="term" value="P:nucleotide metabolic process"/>
    <property type="evidence" value="ECO:0007669"/>
    <property type="project" value="UniProtKB-KW"/>
</dbReference>
<dbReference type="GO" id="GO:0009146">
    <property type="term" value="P:purine nucleoside triphosphate catabolic process"/>
    <property type="evidence" value="ECO:0007669"/>
    <property type="project" value="UniProtKB-UniRule"/>
</dbReference>
<dbReference type="CDD" id="cd00515">
    <property type="entry name" value="HAM1"/>
    <property type="match status" value="1"/>
</dbReference>
<dbReference type="FunFam" id="3.90.950.10:FF:000001">
    <property type="entry name" value="dITP/XTP pyrophosphatase"/>
    <property type="match status" value="1"/>
</dbReference>
<dbReference type="Gene3D" id="3.90.950.10">
    <property type="match status" value="1"/>
</dbReference>
<dbReference type="HAMAP" id="MF_01405">
    <property type="entry name" value="Non_canon_purine_NTPase"/>
    <property type="match status" value="1"/>
</dbReference>
<dbReference type="InterPro" id="IPR020922">
    <property type="entry name" value="dITP/XTP_pyrophosphatase"/>
</dbReference>
<dbReference type="InterPro" id="IPR029001">
    <property type="entry name" value="ITPase-like_fam"/>
</dbReference>
<dbReference type="InterPro" id="IPR002637">
    <property type="entry name" value="RdgB/HAM1"/>
</dbReference>
<dbReference type="NCBIfam" id="NF011396">
    <property type="entry name" value="PRK14821.1"/>
    <property type="match status" value="1"/>
</dbReference>
<dbReference type="NCBIfam" id="TIGR00042">
    <property type="entry name" value="RdgB/HAM1 family non-canonical purine NTP pyrophosphatase"/>
    <property type="match status" value="1"/>
</dbReference>
<dbReference type="PANTHER" id="PTHR11067:SF9">
    <property type="entry name" value="INOSINE TRIPHOSPHATE PYROPHOSPHATASE"/>
    <property type="match status" value="1"/>
</dbReference>
<dbReference type="PANTHER" id="PTHR11067">
    <property type="entry name" value="INOSINE TRIPHOSPHATE PYROPHOSPHATASE/HAM1 PROTEIN"/>
    <property type="match status" value="1"/>
</dbReference>
<dbReference type="Pfam" id="PF01725">
    <property type="entry name" value="Ham1p_like"/>
    <property type="match status" value="1"/>
</dbReference>
<dbReference type="SUPFAM" id="SSF52972">
    <property type="entry name" value="ITPase-like"/>
    <property type="match status" value="1"/>
</dbReference>
<name>IXTPA_METMA</name>
<sequence>MHKIVFVTGNKGKFAEVRDILKNFGIEAIQNKDGYPELQEDELEPIAANGAQYVANKLNMPVMVDDSGIFINALNGFPGPYSRFVEDKLGNPKVLKLMEGEKDRSAYFKTVIGYCEPGQEPLVFPGVVEGKIAYEERGTGGFGYDPIFEYNGMTFGELGDEEKNKVSHRRRAVDNFLEWFIGGA</sequence>
<organism>
    <name type="scientific">Methanosarcina mazei (strain ATCC BAA-159 / DSM 3647 / Goe1 / Go1 / JCM 11833 / OCM 88)</name>
    <name type="common">Methanosarcina frisia</name>
    <dbReference type="NCBI Taxonomy" id="192952"/>
    <lineage>
        <taxon>Archaea</taxon>
        <taxon>Methanobacteriati</taxon>
        <taxon>Methanobacteriota</taxon>
        <taxon>Stenosarchaea group</taxon>
        <taxon>Methanomicrobia</taxon>
        <taxon>Methanosarcinales</taxon>
        <taxon>Methanosarcinaceae</taxon>
        <taxon>Methanosarcina</taxon>
    </lineage>
</organism>
<gene>
    <name type="ordered locus">MM_0603</name>
</gene>
<protein>
    <recommendedName>
        <fullName evidence="1">dITP/XTP pyrophosphatase</fullName>
        <ecNumber evidence="1">3.6.1.66</ecNumber>
    </recommendedName>
    <alternativeName>
        <fullName evidence="1">Non-canonical purine NTP pyrophosphatase</fullName>
    </alternativeName>
    <alternativeName>
        <fullName evidence="1">Non-standard purine NTP pyrophosphatase</fullName>
    </alternativeName>
    <alternativeName>
        <fullName evidence="1">Nucleoside-triphosphate diphosphatase</fullName>
    </alternativeName>
    <alternativeName>
        <fullName evidence="1">Nucleoside-triphosphate pyrophosphatase</fullName>
        <shortName evidence="1">NTPase</shortName>
    </alternativeName>
</protein>
<accession>Q8PZ91</accession>
<proteinExistence type="inferred from homology"/>
<feature type="chain" id="PRO_0000178276" description="dITP/XTP pyrophosphatase">
    <location>
        <begin position="1"/>
        <end position="184"/>
    </location>
</feature>
<feature type="active site" description="Proton acceptor" evidence="1">
    <location>
        <position position="66"/>
    </location>
</feature>
<feature type="binding site" evidence="1">
    <location>
        <begin position="8"/>
        <end position="13"/>
    </location>
    <ligand>
        <name>substrate</name>
    </ligand>
</feature>
<feature type="binding site" evidence="1">
    <location>
        <position position="37"/>
    </location>
    <ligand>
        <name>Mg(2+)</name>
        <dbReference type="ChEBI" id="CHEBI:18420"/>
    </ligand>
</feature>
<feature type="binding site" evidence="1">
    <location>
        <position position="66"/>
    </location>
    <ligand>
        <name>Mg(2+)</name>
        <dbReference type="ChEBI" id="CHEBI:18420"/>
    </ligand>
</feature>
<feature type="binding site" evidence="1">
    <location>
        <position position="67"/>
    </location>
    <ligand>
        <name>substrate</name>
    </ligand>
</feature>
<feature type="binding site" evidence="1">
    <location>
        <begin position="142"/>
        <end position="145"/>
    </location>
    <ligand>
        <name>substrate</name>
    </ligand>
</feature>
<feature type="binding site" evidence="1">
    <location>
        <position position="163"/>
    </location>
    <ligand>
        <name>substrate</name>
    </ligand>
</feature>
<feature type="binding site" evidence="1">
    <location>
        <begin position="168"/>
        <end position="169"/>
    </location>
    <ligand>
        <name>substrate</name>
    </ligand>
</feature>
<comment type="function">
    <text evidence="1">Pyrophosphatase that catalyzes the hydrolysis of nucleoside triphosphates to their monophosphate derivatives, with a high preference for the non-canonical purine nucleotides XTP (xanthosine triphosphate), dITP (deoxyinosine triphosphate) and ITP. Seems to function as a house-cleaning enzyme that removes non-canonical purine nucleotides from the nucleotide pool, thus preventing their incorporation into DNA/RNA and avoiding chromosomal lesions.</text>
</comment>
<comment type="catalytic activity">
    <reaction evidence="1">
        <text>XTP + H2O = XMP + diphosphate + H(+)</text>
        <dbReference type="Rhea" id="RHEA:28610"/>
        <dbReference type="ChEBI" id="CHEBI:15377"/>
        <dbReference type="ChEBI" id="CHEBI:15378"/>
        <dbReference type="ChEBI" id="CHEBI:33019"/>
        <dbReference type="ChEBI" id="CHEBI:57464"/>
        <dbReference type="ChEBI" id="CHEBI:61314"/>
        <dbReference type="EC" id="3.6.1.66"/>
    </reaction>
</comment>
<comment type="catalytic activity">
    <reaction evidence="1">
        <text>dITP + H2O = dIMP + diphosphate + H(+)</text>
        <dbReference type="Rhea" id="RHEA:28342"/>
        <dbReference type="ChEBI" id="CHEBI:15377"/>
        <dbReference type="ChEBI" id="CHEBI:15378"/>
        <dbReference type="ChEBI" id="CHEBI:33019"/>
        <dbReference type="ChEBI" id="CHEBI:61194"/>
        <dbReference type="ChEBI" id="CHEBI:61382"/>
        <dbReference type="EC" id="3.6.1.66"/>
    </reaction>
</comment>
<comment type="catalytic activity">
    <reaction evidence="1">
        <text>ITP + H2O = IMP + diphosphate + H(+)</text>
        <dbReference type="Rhea" id="RHEA:29399"/>
        <dbReference type="ChEBI" id="CHEBI:15377"/>
        <dbReference type="ChEBI" id="CHEBI:15378"/>
        <dbReference type="ChEBI" id="CHEBI:33019"/>
        <dbReference type="ChEBI" id="CHEBI:58053"/>
        <dbReference type="ChEBI" id="CHEBI:61402"/>
        <dbReference type="EC" id="3.6.1.66"/>
    </reaction>
</comment>
<comment type="cofactor">
    <cofactor evidence="1">
        <name>Mg(2+)</name>
        <dbReference type="ChEBI" id="CHEBI:18420"/>
    </cofactor>
    <text evidence="1">Binds 1 Mg(2+) ion per subunit.</text>
</comment>
<comment type="subunit">
    <text evidence="1">Homodimer.</text>
</comment>
<comment type="similarity">
    <text evidence="1">Belongs to the HAM1 NTPase family.</text>
</comment>
<reference key="1">
    <citation type="journal article" date="2002" name="J. Mol. Microbiol. Biotechnol.">
        <title>The genome of Methanosarcina mazei: evidence for lateral gene transfer between Bacteria and Archaea.</title>
        <authorList>
            <person name="Deppenmeier U."/>
            <person name="Johann A."/>
            <person name="Hartsch T."/>
            <person name="Merkl R."/>
            <person name="Schmitz R.A."/>
            <person name="Martinez-Arias R."/>
            <person name="Henne A."/>
            <person name="Wiezer A."/>
            <person name="Baeumer S."/>
            <person name="Jacobi C."/>
            <person name="Brueggemann H."/>
            <person name="Lienard T."/>
            <person name="Christmann A."/>
            <person name="Boemecke M."/>
            <person name="Steckel S."/>
            <person name="Bhattacharyya A."/>
            <person name="Lykidis A."/>
            <person name="Overbeek R."/>
            <person name="Klenk H.-P."/>
            <person name="Gunsalus R.P."/>
            <person name="Fritz H.-J."/>
            <person name="Gottschalk G."/>
        </authorList>
    </citation>
    <scope>NUCLEOTIDE SEQUENCE [LARGE SCALE GENOMIC DNA]</scope>
    <source>
        <strain>ATCC BAA-159 / DSM 3647 / Goe1 / Go1 / JCM 11833 / OCM 88</strain>
    </source>
</reference>
<keyword id="KW-0378">Hydrolase</keyword>
<keyword id="KW-0460">Magnesium</keyword>
<keyword id="KW-0479">Metal-binding</keyword>
<keyword id="KW-0546">Nucleotide metabolism</keyword>
<keyword id="KW-0547">Nucleotide-binding</keyword>